<keyword id="KW-0963">Cytoplasm</keyword>
<keyword id="KW-0236">DNA replication inhibitor</keyword>
<keyword id="KW-0238">DNA-binding</keyword>
<keyword id="KW-1185">Reference proteome</keyword>
<gene>
    <name evidence="1" type="primary">seqA</name>
    <name type="ordered locus">Fbal_2367</name>
</gene>
<feature type="chain" id="PRO_0000413921" description="Negative modulator of initiation of replication">
    <location>
        <begin position="1"/>
        <end position="180"/>
    </location>
</feature>
<feature type="region of interest" description="Interaction with DNA" evidence="1">
    <location>
        <begin position="87"/>
        <end position="88"/>
    </location>
</feature>
<organism>
    <name type="scientific">Ferrimonas balearica (strain DSM 9799 / CCM 4581 / KCTC 23876 / PAT)</name>
    <dbReference type="NCBI Taxonomy" id="550540"/>
    <lineage>
        <taxon>Bacteria</taxon>
        <taxon>Pseudomonadati</taxon>
        <taxon>Pseudomonadota</taxon>
        <taxon>Gammaproteobacteria</taxon>
        <taxon>Alteromonadales</taxon>
        <taxon>Ferrimonadaceae</taxon>
        <taxon>Ferrimonas</taxon>
    </lineage>
</organism>
<evidence type="ECO:0000255" key="1">
    <source>
        <dbReference type="HAMAP-Rule" id="MF_00908"/>
    </source>
</evidence>
<comment type="function">
    <text evidence="1">Negative regulator of replication initiation, which contributes to regulation of DNA replication and ensures that replication initiation occurs exactly once per chromosome per cell cycle. Binds to pairs of hemimethylated GATC sequences in the oriC region, thus preventing assembly of replication proteins and re-initiation at newly replicated origins. Repression is relieved when the region becomes fully methylated.</text>
</comment>
<comment type="subunit">
    <text evidence="1">Homodimer. Polymerizes to form helical filaments.</text>
</comment>
<comment type="subcellular location">
    <subcellularLocation>
        <location evidence="1">Cytoplasm</location>
    </subcellularLocation>
</comment>
<comment type="similarity">
    <text evidence="1">Belongs to the SeqA family.</text>
</comment>
<protein>
    <recommendedName>
        <fullName evidence="1">Negative modulator of initiation of replication</fullName>
    </recommendedName>
</protein>
<reference key="1">
    <citation type="journal article" date="2010" name="Stand. Genomic Sci.">
        <title>Complete genome sequence of Ferrimonas balearica type strain (PAT).</title>
        <authorList>
            <person name="Nolan M."/>
            <person name="Sikorski J."/>
            <person name="Davenport K."/>
            <person name="Lucas S."/>
            <person name="Del Rio T.G."/>
            <person name="Tice H."/>
            <person name="Cheng J.F."/>
            <person name="Goodwin L."/>
            <person name="Pitluck S."/>
            <person name="Liolios K."/>
            <person name="Ivanova N."/>
            <person name="Mavromatis K."/>
            <person name="Ovchinnikova G."/>
            <person name="Pati A."/>
            <person name="Chen A."/>
            <person name="Palaniappan K."/>
            <person name="Land M."/>
            <person name="Hauser L."/>
            <person name="Chang Y.J."/>
            <person name="Jeffries C.D."/>
            <person name="Tapia R."/>
            <person name="Brettin T."/>
            <person name="Detter J.C."/>
            <person name="Han C."/>
            <person name="Yasawong M."/>
            <person name="Rohde M."/>
            <person name="Tindall B.J."/>
            <person name="Goker M."/>
            <person name="Woyke T."/>
            <person name="Bristow J."/>
            <person name="Eisen J.A."/>
            <person name="Markowitz V."/>
            <person name="Hugenholtz P."/>
            <person name="Kyrpides N.C."/>
            <person name="Klenk H.P."/>
            <person name="Lapidus A."/>
        </authorList>
    </citation>
    <scope>NUCLEOTIDE SEQUENCE [LARGE SCALE GENOMIC DNA]</scope>
    <source>
        <strain>DSM 9799 / CCM 4581 / KCTC 23876 / PAT</strain>
    </source>
</reference>
<sequence length="180" mass="19911">MKYIEIDDELYRYIASNTQQIGESASDILRRLLGLEVTAEAESIPERISEPSMEGVEEAAPVRSAVAEAGVFEELVDDEQLPRQKGAVGRFLYLLDCLYRQHPSAFDGVLAIRGRDRLYFSQSKEALLKASPSANPKQIGASPFWVSANNNTAKKRAILEEVLEILGCQKALAARIAEQV</sequence>
<dbReference type="EMBL" id="CP002209">
    <property type="protein sequence ID" value="ADN76569.1"/>
    <property type="molecule type" value="Genomic_DNA"/>
</dbReference>
<dbReference type="RefSeq" id="WP_013345875.1">
    <property type="nucleotide sequence ID" value="NC_014541.1"/>
</dbReference>
<dbReference type="SMR" id="E1SM51"/>
<dbReference type="STRING" id="550540.Fbal_2367"/>
<dbReference type="GeneID" id="67182577"/>
<dbReference type="KEGG" id="fbl:Fbal_2367"/>
<dbReference type="eggNOG" id="COG3057">
    <property type="taxonomic scope" value="Bacteria"/>
</dbReference>
<dbReference type="HOGENOM" id="CLU_099733_0_0_6"/>
<dbReference type="OrthoDB" id="5591069at2"/>
<dbReference type="Proteomes" id="UP000006683">
    <property type="component" value="Chromosome"/>
</dbReference>
<dbReference type="GO" id="GO:0005737">
    <property type="term" value="C:cytoplasm"/>
    <property type="evidence" value="ECO:0007669"/>
    <property type="project" value="UniProtKB-SubCell"/>
</dbReference>
<dbReference type="GO" id="GO:0003677">
    <property type="term" value="F:DNA binding"/>
    <property type="evidence" value="ECO:0007669"/>
    <property type="project" value="UniProtKB-UniRule"/>
</dbReference>
<dbReference type="GO" id="GO:0032297">
    <property type="term" value="P:negative regulation of DNA-templated DNA replication initiation"/>
    <property type="evidence" value="ECO:0007669"/>
    <property type="project" value="UniProtKB-UniRule"/>
</dbReference>
<dbReference type="GO" id="GO:0006355">
    <property type="term" value="P:regulation of DNA-templated transcription"/>
    <property type="evidence" value="ECO:0007669"/>
    <property type="project" value="InterPro"/>
</dbReference>
<dbReference type="Gene3D" id="1.10.1220.10">
    <property type="entry name" value="Met repressor-like"/>
    <property type="match status" value="1"/>
</dbReference>
<dbReference type="Gene3D" id="1.20.1380.10">
    <property type="entry name" value="Replication modulator SeqA, C-terminal DNA-binding domain"/>
    <property type="match status" value="1"/>
</dbReference>
<dbReference type="HAMAP" id="MF_00908">
    <property type="entry name" value="SeqA"/>
    <property type="match status" value="1"/>
</dbReference>
<dbReference type="InterPro" id="IPR013321">
    <property type="entry name" value="Arc_rbn_hlx_hlx"/>
</dbReference>
<dbReference type="InterPro" id="IPR010985">
    <property type="entry name" value="Ribbon_hlx_hlx"/>
</dbReference>
<dbReference type="InterPro" id="IPR005621">
    <property type="entry name" value="SeqA"/>
</dbReference>
<dbReference type="InterPro" id="IPR026577">
    <property type="entry name" value="SeqA_DNA-bd_C"/>
</dbReference>
<dbReference type="InterPro" id="IPR036835">
    <property type="entry name" value="SeqA_DNA-bd_C_sf"/>
</dbReference>
<dbReference type="InterPro" id="IPR033761">
    <property type="entry name" value="SeqA_N"/>
</dbReference>
<dbReference type="NCBIfam" id="NF008389">
    <property type="entry name" value="PRK11187.1"/>
    <property type="match status" value="1"/>
</dbReference>
<dbReference type="Pfam" id="PF03925">
    <property type="entry name" value="SeqA"/>
    <property type="match status" value="1"/>
</dbReference>
<dbReference type="Pfam" id="PF17206">
    <property type="entry name" value="SeqA_N"/>
    <property type="match status" value="1"/>
</dbReference>
<dbReference type="PIRSF" id="PIRSF019401">
    <property type="entry name" value="SeqA"/>
    <property type="match status" value="1"/>
</dbReference>
<dbReference type="SUPFAM" id="SSF82808">
    <property type="entry name" value="Replication modulator SeqA, C-terminal DNA-binding domain"/>
    <property type="match status" value="1"/>
</dbReference>
<dbReference type="SUPFAM" id="SSF47598">
    <property type="entry name" value="Ribbon-helix-helix"/>
    <property type="match status" value="1"/>
</dbReference>
<proteinExistence type="inferred from homology"/>
<accession>E1SM51</accession>
<name>SEQA_FERBD</name>